<reference key="1">
    <citation type="journal article" date="2001" name="Lancet">
        <title>Whole genome sequencing of meticillin-resistant Staphylococcus aureus.</title>
        <authorList>
            <person name="Kuroda M."/>
            <person name="Ohta T."/>
            <person name="Uchiyama I."/>
            <person name="Baba T."/>
            <person name="Yuzawa H."/>
            <person name="Kobayashi I."/>
            <person name="Cui L."/>
            <person name="Oguchi A."/>
            <person name="Aoki K."/>
            <person name="Nagai Y."/>
            <person name="Lian J.-Q."/>
            <person name="Ito T."/>
            <person name="Kanamori M."/>
            <person name="Matsumaru H."/>
            <person name="Maruyama A."/>
            <person name="Murakami H."/>
            <person name="Hosoyama A."/>
            <person name="Mizutani-Ui Y."/>
            <person name="Takahashi N.K."/>
            <person name="Sawano T."/>
            <person name="Inoue R."/>
            <person name="Kaito C."/>
            <person name="Sekimizu K."/>
            <person name="Hirakawa H."/>
            <person name="Kuhara S."/>
            <person name="Goto S."/>
            <person name="Yabuzaki J."/>
            <person name="Kanehisa M."/>
            <person name="Yamashita A."/>
            <person name="Oshima K."/>
            <person name="Furuya K."/>
            <person name="Yoshino C."/>
            <person name="Shiba T."/>
            <person name="Hattori M."/>
            <person name="Ogasawara N."/>
            <person name="Hayashi H."/>
            <person name="Hiramatsu K."/>
        </authorList>
    </citation>
    <scope>NUCLEOTIDE SEQUENCE [LARGE SCALE GENOMIC DNA]</scope>
    <source>
        <strain>N315</strain>
    </source>
</reference>
<reference key="2">
    <citation type="submission" date="2007-10" db="UniProtKB">
        <title>Shotgun proteomic analysis of total and membrane protein extracts of S. aureus strain N315.</title>
        <authorList>
            <person name="Vaezzadeh A.R."/>
            <person name="Deshusses J."/>
            <person name="Lescuyer P."/>
            <person name="Hochstrasser D.F."/>
        </authorList>
    </citation>
    <scope>IDENTIFICATION BY MASS SPECTROMETRY [LARGE SCALE ANALYSIS]</scope>
    <source>
        <strain>N315</strain>
    </source>
</reference>
<name>Y957_STAAN</name>
<comment type="similarity">
    <text evidence="1">Belongs to the UPF0637 family.</text>
</comment>
<gene>
    <name type="ordered locus">SA0957</name>
</gene>
<organism>
    <name type="scientific">Staphylococcus aureus (strain N315)</name>
    <dbReference type="NCBI Taxonomy" id="158879"/>
    <lineage>
        <taxon>Bacteria</taxon>
        <taxon>Bacillati</taxon>
        <taxon>Bacillota</taxon>
        <taxon>Bacilli</taxon>
        <taxon>Bacillales</taxon>
        <taxon>Staphylococcaceae</taxon>
        <taxon>Staphylococcus</taxon>
    </lineage>
</organism>
<evidence type="ECO:0000255" key="1">
    <source>
        <dbReference type="HAMAP-Rule" id="MF_01851"/>
    </source>
</evidence>
<feature type="chain" id="PRO_0000348328" description="UPF0637 protein SA0957">
    <location>
        <begin position="1"/>
        <end position="204"/>
    </location>
</feature>
<accession>Q99UZ6</accession>
<proteinExistence type="evidence at protein level"/>
<protein>
    <recommendedName>
        <fullName evidence="1">UPF0637 protein SA0957</fullName>
    </recommendedName>
</protein>
<sequence length="204" mass="23963">MTKYTFKPKDFKAFNVEGLDARMEALNEYIRPQLHELGEYFSDFFTSQTGETFYPHVAKHARRSVNAPKDTWVAFATSKRGYKMLPHFQIGMFEDQLFVMFGIMHEAKDKATRAKVFERKFKAIQQLPDDYRVCLDHMKPDKPFIKDLTDDDLKEAIQRAINVKKGEFFIARAITPQDKRLKSDKAFIAFLEETFDQFLPFYSA</sequence>
<dbReference type="EMBL" id="BA000018">
    <property type="protein sequence ID" value="BAB42203.1"/>
    <property type="molecule type" value="Genomic_DNA"/>
</dbReference>
<dbReference type="PIR" id="G89880">
    <property type="entry name" value="G89880"/>
</dbReference>
<dbReference type="RefSeq" id="WP_000170596.1">
    <property type="nucleotide sequence ID" value="NC_002745.2"/>
</dbReference>
<dbReference type="SMR" id="Q99UZ6"/>
<dbReference type="EnsemblBacteria" id="BAB42203">
    <property type="protein sequence ID" value="BAB42203"/>
    <property type="gene ID" value="BAB42203"/>
</dbReference>
<dbReference type="KEGG" id="sau:SA0957"/>
<dbReference type="HOGENOM" id="CLU_096059_0_0_9"/>
<dbReference type="Gene3D" id="3.30.930.20">
    <property type="entry name" value="Protein of unknown function DUF1054"/>
    <property type="match status" value="1"/>
</dbReference>
<dbReference type="HAMAP" id="MF_01851">
    <property type="entry name" value="UPF0637"/>
    <property type="match status" value="1"/>
</dbReference>
<dbReference type="InterPro" id="IPR009403">
    <property type="entry name" value="UPF0637"/>
</dbReference>
<dbReference type="InterPro" id="IPR053707">
    <property type="entry name" value="UPF0637_domain_sf"/>
</dbReference>
<dbReference type="Pfam" id="PF06335">
    <property type="entry name" value="DUF1054"/>
    <property type="match status" value="1"/>
</dbReference>
<dbReference type="PIRSF" id="PIRSF021332">
    <property type="entry name" value="DUF1054"/>
    <property type="match status" value="1"/>
</dbReference>
<dbReference type="SUPFAM" id="SSF142913">
    <property type="entry name" value="YktB/PF0168-like"/>
    <property type="match status" value="1"/>
</dbReference>